<reference key="1">
    <citation type="journal article" date="2002" name="J. Mol. Microbiol. Biotechnol.">
        <title>The genome of Methanosarcina mazei: evidence for lateral gene transfer between Bacteria and Archaea.</title>
        <authorList>
            <person name="Deppenmeier U."/>
            <person name="Johann A."/>
            <person name="Hartsch T."/>
            <person name="Merkl R."/>
            <person name="Schmitz R.A."/>
            <person name="Martinez-Arias R."/>
            <person name="Henne A."/>
            <person name="Wiezer A."/>
            <person name="Baeumer S."/>
            <person name="Jacobi C."/>
            <person name="Brueggemann H."/>
            <person name="Lienard T."/>
            <person name="Christmann A."/>
            <person name="Boemecke M."/>
            <person name="Steckel S."/>
            <person name="Bhattacharyya A."/>
            <person name="Lykidis A."/>
            <person name="Overbeek R."/>
            <person name="Klenk H.-P."/>
            <person name="Gunsalus R.P."/>
            <person name="Fritz H.-J."/>
            <person name="Gottschalk G."/>
        </authorList>
    </citation>
    <scope>NUCLEOTIDE SEQUENCE [LARGE SCALE GENOMIC DNA]</scope>
    <source>
        <strain>ATCC BAA-159 / DSM 3647 / Goe1 / Go1 / JCM 11833 / OCM 88</strain>
    </source>
</reference>
<feature type="chain" id="PRO_0000136795" description="Large ribosomal subunit protein eL8">
    <location>
        <begin position="1"/>
        <end position="120"/>
    </location>
</feature>
<name>RL7A_METMA</name>
<organism>
    <name type="scientific">Methanosarcina mazei (strain ATCC BAA-159 / DSM 3647 / Goe1 / Go1 / JCM 11833 / OCM 88)</name>
    <name type="common">Methanosarcina frisia</name>
    <dbReference type="NCBI Taxonomy" id="192952"/>
    <lineage>
        <taxon>Archaea</taxon>
        <taxon>Methanobacteriati</taxon>
        <taxon>Methanobacteriota</taxon>
        <taxon>Stenosarchaea group</taxon>
        <taxon>Methanomicrobia</taxon>
        <taxon>Methanosarcinales</taxon>
        <taxon>Methanosarcinaceae</taxon>
        <taxon>Methanosarcina</taxon>
    </lineage>
</organism>
<accession>Q8PU74</accession>
<evidence type="ECO:0000255" key="1">
    <source>
        <dbReference type="HAMAP-Rule" id="MF_00326"/>
    </source>
</evidence>
<evidence type="ECO:0000305" key="2"/>
<gene>
    <name evidence="1" type="primary">rpl7ae</name>
    <name type="ordered locus">MM_2467</name>
</gene>
<keyword id="KW-0963">Cytoplasm</keyword>
<keyword id="KW-0687">Ribonucleoprotein</keyword>
<keyword id="KW-0689">Ribosomal protein</keyword>
<keyword id="KW-0694">RNA-binding</keyword>
<keyword id="KW-0699">rRNA-binding</keyword>
<keyword id="KW-0819">tRNA processing</keyword>
<protein>
    <recommendedName>
        <fullName evidence="1">Large ribosomal subunit protein eL8</fullName>
    </recommendedName>
    <alternativeName>
        <fullName evidence="2">50S ribosomal protein L7Ae</fullName>
    </alternativeName>
    <alternativeName>
        <fullName evidence="1">Ribosomal protein L8e</fullName>
    </alternativeName>
</protein>
<dbReference type="EMBL" id="AE008384">
    <property type="protein sequence ID" value="AAM32163.1"/>
    <property type="molecule type" value="Genomic_DNA"/>
</dbReference>
<dbReference type="RefSeq" id="WP_011034385.1">
    <property type="nucleotide sequence ID" value="NC_003901.1"/>
</dbReference>
<dbReference type="SMR" id="Q8PU74"/>
<dbReference type="GeneID" id="82161541"/>
<dbReference type="KEGG" id="mma:MM_2467"/>
<dbReference type="PATRIC" id="fig|192952.21.peg.2822"/>
<dbReference type="eggNOG" id="arCOG01751">
    <property type="taxonomic scope" value="Archaea"/>
</dbReference>
<dbReference type="HOGENOM" id="CLU_084513_4_0_2"/>
<dbReference type="Proteomes" id="UP000000595">
    <property type="component" value="Chromosome"/>
</dbReference>
<dbReference type="GO" id="GO:0005737">
    <property type="term" value="C:cytoplasm"/>
    <property type="evidence" value="ECO:0007669"/>
    <property type="project" value="UniProtKB-SubCell"/>
</dbReference>
<dbReference type="GO" id="GO:1990904">
    <property type="term" value="C:ribonucleoprotein complex"/>
    <property type="evidence" value="ECO:0007669"/>
    <property type="project" value="UniProtKB-KW"/>
</dbReference>
<dbReference type="GO" id="GO:0005840">
    <property type="term" value="C:ribosome"/>
    <property type="evidence" value="ECO:0007669"/>
    <property type="project" value="UniProtKB-KW"/>
</dbReference>
<dbReference type="GO" id="GO:0004526">
    <property type="term" value="F:ribonuclease P activity"/>
    <property type="evidence" value="ECO:0007669"/>
    <property type="project" value="UniProtKB-UniRule"/>
</dbReference>
<dbReference type="GO" id="GO:0019843">
    <property type="term" value="F:rRNA binding"/>
    <property type="evidence" value="ECO:0007669"/>
    <property type="project" value="UniProtKB-KW"/>
</dbReference>
<dbReference type="GO" id="GO:0003735">
    <property type="term" value="F:structural constituent of ribosome"/>
    <property type="evidence" value="ECO:0007669"/>
    <property type="project" value="InterPro"/>
</dbReference>
<dbReference type="GO" id="GO:0042254">
    <property type="term" value="P:ribosome biogenesis"/>
    <property type="evidence" value="ECO:0007669"/>
    <property type="project" value="InterPro"/>
</dbReference>
<dbReference type="GO" id="GO:0006412">
    <property type="term" value="P:translation"/>
    <property type="evidence" value="ECO:0007669"/>
    <property type="project" value="UniProtKB-UniRule"/>
</dbReference>
<dbReference type="GO" id="GO:0001682">
    <property type="term" value="P:tRNA 5'-leader removal"/>
    <property type="evidence" value="ECO:0007669"/>
    <property type="project" value="UniProtKB-UniRule"/>
</dbReference>
<dbReference type="FunFam" id="3.30.1330.30:FF:000020">
    <property type="entry name" value="50S ribosomal protein L7Ae"/>
    <property type="match status" value="1"/>
</dbReference>
<dbReference type="Gene3D" id="3.30.1330.30">
    <property type="match status" value="1"/>
</dbReference>
<dbReference type="HAMAP" id="MF_00326">
    <property type="entry name" value="Ribosomal_eL8"/>
    <property type="match status" value="1"/>
</dbReference>
<dbReference type="InterPro" id="IPR029064">
    <property type="entry name" value="Ribosomal_eL30-like_sf"/>
</dbReference>
<dbReference type="InterPro" id="IPR004037">
    <property type="entry name" value="Ribosomal_eL8-like_CS"/>
</dbReference>
<dbReference type="InterPro" id="IPR004038">
    <property type="entry name" value="Ribosomal_eL8/eL30/eS12/Gad45"/>
</dbReference>
<dbReference type="InterPro" id="IPR018492">
    <property type="entry name" value="Ribosomal_eL8/Nhp2"/>
</dbReference>
<dbReference type="InterPro" id="IPR022481">
    <property type="entry name" value="Ribosomal_eL8_arc"/>
</dbReference>
<dbReference type="NCBIfam" id="TIGR03677">
    <property type="entry name" value="eL8_ribo"/>
    <property type="match status" value="1"/>
</dbReference>
<dbReference type="Pfam" id="PF01248">
    <property type="entry name" value="Ribosomal_L7Ae"/>
    <property type="match status" value="1"/>
</dbReference>
<dbReference type="PRINTS" id="PR00881">
    <property type="entry name" value="L7ARS6FAMILY"/>
</dbReference>
<dbReference type="PRINTS" id="PR00884">
    <property type="entry name" value="RIBOSOMALHS6"/>
</dbReference>
<dbReference type="SUPFAM" id="SSF55315">
    <property type="entry name" value="L30e-like"/>
    <property type="match status" value="1"/>
</dbReference>
<dbReference type="PROSITE" id="PS01082">
    <property type="entry name" value="RIBOSOMAL_L7AE"/>
    <property type="match status" value="1"/>
</dbReference>
<comment type="function">
    <text evidence="1">Multifunctional RNA-binding protein that recognizes the K-turn motif in ribosomal RNA, the RNA component of RNase P, box H/ACA, box C/D and box C'/D' sRNAs.</text>
</comment>
<comment type="subunit">
    <text evidence="1">Part of the 50S ribosomal subunit. Probably part of the RNase P complex.</text>
</comment>
<comment type="subcellular location">
    <subcellularLocation>
        <location evidence="1">Cytoplasm</location>
    </subcellularLocation>
</comment>
<comment type="similarity">
    <text evidence="1">Belongs to the eukaryotic ribosomal protein eL8 family.</text>
</comment>
<proteinExistence type="inferred from homology"/>
<sequence>MAQLAKFDVPEELTNKALEALELARDTGKIKKGTNEATKAIERGNAKLVLIAEDIEPAEIVAHIGPLSEEKKAPYIYIKNQKDLGAASGLGVSCATVAIVDAGKAAEMIQDIAQKLDALK</sequence>